<name>PROFY_OLEEU</name>
<protein>
    <recommendedName>
        <fullName>Profilin-5</fullName>
    </recommendedName>
    <alternativeName>
        <fullName>Pollen allergen Ole e 2</fullName>
    </alternativeName>
    <allergenName>Ole e 2</allergenName>
</protein>
<keyword id="KW-0009">Actin-binding</keyword>
<keyword id="KW-0020">Allergen</keyword>
<keyword id="KW-0963">Cytoplasm</keyword>
<keyword id="KW-0206">Cytoskeleton</keyword>
<keyword id="KW-1015">Disulfide bond</keyword>
<keyword id="KW-0597">Phosphoprotein</keyword>
<accession>A4GD54</accession>
<reference key="1">
    <citation type="journal article" date="2012" name="PLoS ONE">
        <title>Characterization of profilin polymorphism in pollen with a focus on multifunctionality.</title>
        <authorList>
            <person name="Jimenez-Lopez J.C."/>
            <person name="Morales S."/>
            <person name="Castro A.J."/>
            <person name="Volkmann D."/>
            <person name="Rodriguez-Garcia M.I."/>
            <person name="Alche Jde D."/>
        </authorList>
    </citation>
    <scope>NUCLEOTIDE SEQUENCE [MRNA]</scope>
    <scope>POLYMORPHISM</scope>
    <source>
        <strain>cv. Verdial de Huevar</strain>
    </source>
</reference>
<reference key="2">
    <citation type="journal article" date="2013" name="PLoS ONE">
        <title>Analysis of the effects of polymorphism on pollen profilin structural functionality and the generation of conformational, T- and B-cell epitopes.</title>
        <authorList>
            <person name="Jimenez-Lopez J.C."/>
            <person name="Rodriguez-Garcia M.I."/>
            <person name="Alche J.D."/>
        </authorList>
    </citation>
    <scope>3D-STRUCTURE MODELING</scope>
    <scope>DISULFIDE BOND</scope>
</reference>
<dbReference type="EMBL" id="DQ117906">
    <property type="protein sequence ID" value="AAZ30396.1"/>
    <property type="molecule type" value="mRNA"/>
</dbReference>
<dbReference type="SMR" id="A4GD54"/>
<dbReference type="Allergome" id="490">
    <property type="allergen name" value="Ole e 2"/>
</dbReference>
<dbReference type="GO" id="GO:0005938">
    <property type="term" value="C:cell cortex"/>
    <property type="evidence" value="ECO:0007669"/>
    <property type="project" value="TreeGrafter"/>
</dbReference>
<dbReference type="GO" id="GO:0005856">
    <property type="term" value="C:cytoskeleton"/>
    <property type="evidence" value="ECO:0007669"/>
    <property type="project" value="UniProtKB-SubCell"/>
</dbReference>
<dbReference type="GO" id="GO:0003785">
    <property type="term" value="F:actin monomer binding"/>
    <property type="evidence" value="ECO:0007669"/>
    <property type="project" value="TreeGrafter"/>
</dbReference>
<dbReference type="CDD" id="cd00148">
    <property type="entry name" value="PROF"/>
    <property type="match status" value="1"/>
</dbReference>
<dbReference type="FunFam" id="3.30.450.30:FF:000001">
    <property type="entry name" value="Profilin"/>
    <property type="match status" value="1"/>
</dbReference>
<dbReference type="Gene3D" id="3.30.450.30">
    <property type="entry name" value="Dynein light chain 2a, cytoplasmic"/>
    <property type="match status" value="1"/>
</dbReference>
<dbReference type="InterPro" id="IPR048278">
    <property type="entry name" value="PFN"/>
</dbReference>
<dbReference type="InterPro" id="IPR005455">
    <property type="entry name" value="PFN_euk"/>
</dbReference>
<dbReference type="InterPro" id="IPR036140">
    <property type="entry name" value="PFN_sf"/>
</dbReference>
<dbReference type="InterPro" id="IPR027310">
    <property type="entry name" value="Profilin_CS"/>
</dbReference>
<dbReference type="PANTHER" id="PTHR11604">
    <property type="entry name" value="PROFILIN"/>
    <property type="match status" value="1"/>
</dbReference>
<dbReference type="PANTHER" id="PTHR11604:SF25">
    <property type="entry name" value="PROFILIN-5"/>
    <property type="match status" value="1"/>
</dbReference>
<dbReference type="Pfam" id="PF00235">
    <property type="entry name" value="Profilin"/>
    <property type="match status" value="1"/>
</dbReference>
<dbReference type="PRINTS" id="PR00392">
    <property type="entry name" value="PROFILIN"/>
</dbReference>
<dbReference type="PRINTS" id="PR01640">
    <property type="entry name" value="PROFILINPLNT"/>
</dbReference>
<dbReference type="SMART" id="SM00392">
    <property type="entry name" value="PROF"/>
    <property type="match status" value="1"/>
</dbReference>
<dbReference type="SUPFAM" id="SSF55770">
    <property type="entry name" value="Profilin (actin-binding protein)"/>
    <property type="match status" value="1"/>
</dbReference>
<dbReference type="PROSITE" id="PS00414">
    <property type="entry name" value="PROFILIN"/>
    <property type="match status" value="1"/>
</dbReference>
<comment type="function">
    <text evidence="1">Binds to actin and affects the structure of the cytoskeleton. At high concentrations, profilin prevents the polymerization of actin, whereas it enhances it at low concentrations (By similarity).</text>
</comment>
<comment type="subunit">
    <text evidence="1">Occurs in many kinds of cells as a complex with monomeric actin in a 1:1 ratio.</text>
</comment>
<comment type="subcellular location">
    <subcellularLocation>
        <location evidence="1">Cytoplasm</location>
        <location evidence="1">Cytoskeleton</location>
    </subcellularLocation>
</comment>
<comment type="PTM">
    <text evidence="1">Phosphorylated by MAP kinases.</text>
</comment>
<comment type="polymorphism">
    <text>Several isoforms of the allergen exist due to polymorphism.</text>
</comment>
<comment type="allergen">
    <text>Causes an allergic reaction in human.</text>
</comment>
<comment type="miscellaneous">
    <text evidence="3">The variability of the residues taking part of IgE-binding epitopes might be responsible of the difference in cross-reactivity among olive pollen cultivars, and between distantly related pollen species, leading to a variable range of allergy reactions among atopic patients.</text>
</comment>
<comment type="similarity">
    <text evidence="2">Belongs to the profilin family.</text>
</comment>
<feature type="initiator methionine" description="Removed" evidence="1">
    <location>
        <position position="1"/>
    </location>
</feature>
<feature type="chain" id="PRO_0000424990" description="Profilin-5">
    <location>
        <begin position="2"/>
        <end position="134"/>
    </location>
</feature>
<feature type="short sequence motif" description="Involved in PIP2 interaction">
    <location>
        <begin position="84"/>
        <end position="100"/>
    </location>
</feature>
<feature type="modified residue" description="Phosphothreonine" evidence="1">
    <location>
        <position position="114"/>
    </location>
</feature>
<feature type="disulfide bond" evidence="3">
    <location>
        <begin position="13"/>
        <end position="118"/>
    </location>
</feature>
<sequence>MSWQTYVDDHLMCDIEGHEDHRLTAAAIVGHDGSVWAQSATFPQFRPEEMNGIMTDFNEPGHLAPTGLHLGGTKYMVIQGEAGAVIRGKKGSGGITIKKTGQALVFGIYEEPVTPGQCNMVVERLGDYLLEQGL</sequence>
<proteinExistence type="evidence at protein level"/>
<organism>
    <name type="scientific">Olea europaea</name>
    <name type="common">Common olive</name>
    <dbReference type="NCBI Taxonomy" id="4146"/>
    <lineage>
        <taxon>Eukaryota</taxon>
        <taxon>Viridiplantae</taxon>
        <taxon>Streptophyta</taxon>
        <taxon>Embryophyta</taxon>
        <taxon>Tracheophyta</taxon>
        <taxon>Spermatophyta</taxon>
        <taxon>Magnoliopsida</taxon>
        <taxon>eudicotyledons</taxon>
        <taxon>Gunneridae</taxon>
        <taxon>Pentapetalae</taxon>
        <taxon>asterids</taxon>
        <taxon>lamiids</taxon>
        <taxon>Lamiales</taxon>
        <taxon>Oleaceae</taxon>
        <taxon>Oleeae</taxon>
        <taxon>Olea</taxon>
    </lineage>
</organism>
<evidence type="ECO:0000250" key="1"/>
<evidence type="ECO:0000305" key="2"/>
<evidence type="ECO:0000305" key="3">
    <source>
    </source>
</evidence>